<protein>
    <recommendedName>
        <fullName>Actin, cytoplasmic A3a</fullName>
        <ecNumber evidence="3">3.6.4.-</ecNumber>
    </recommendedName>
</protein>
<comment type="function">
    <text>Actins are highly conserved proteins that are involved in various types of cell motility and are ubiquitously expressed in all eukaryotic cells. Multiple isoforms are involved in various cellular functions such as cytoskeleton structure, cell mobility, chromosome movement and muscle contraction.</text>
</comment>
<comment type="catalytic activity">
    <reaction evidence="3">
        <text>ATP + H2O = ADP + phosphate + H(+)</text>
        <dbReference type="Rhea" id="RHEA:13065"/>
        <dbReference type="ChEBI" id="CHEBI:15377"/>
        <dbReference type="ChEBI" id="CHEBI:15378"/>
        <dbReference type="ChEBI" id="CHEBI:30616"/>
        <dbReference type="ChEBI" id="CHEBI:43474"/>
        <dbReference type="ChEBI" id="CHEBI:456216"/>
    </reaction>
</comment>
<comment type="subcellular location">
    <subcellularLocation>
        <location>Cytoplasm</location>
        <location>Cytoskeleton</location>
    </subcellularLocation>
</comment>
<comment type="tissue specificity">
    <text evidence="4">Brain of newly enclosed adults.</text>
</comment>
<comment type="developmental stage">
    <text evidence="4">Expressed during pupal development and in adults.</text>
</comment>
<comment type="PTM">
    <text evidence="2">Oxidation of Met-45 and Met-48 to form methionine sulfoxide promotes actin filament depolymerization. Methionine sulfoxide is produced stereospecifically, but it is not known whether the (S)-S-oxide or the (R)-S-oxide is produced.</text>
</comment>
<comment type="similarity">
    <text evidence="5">Belongs to the actin family.</text>
</comment>
<feature type="propeptide" id="PRO_0000000672" description="Removed in mature form" evidence="1">
    <location>
        <begin position="1"/>
        <end position="2"/>
    </location>
</feature>
<feature type="chain" id="PRO_0000000673" description="Actin, cytoplasmic A3a">
    <location>
        <begin position="3"/>
        <end position="376"/>
    </location>
</feature>
<feature type="modified residue" description="N-acetylaspartate" evidence="1">
    <location>
        <position position="3"/>
    </location>
</feature>
<feature type="modified residue" description="Methionine sulfoxide" evidence="2">
    <location>
        <position position="45"/>
    </location>
</feature>
<feature type="modified residue" description="Methionine sulfoxide" evidence="2">
    <location>
        <position position="48"/>
    </location>
</feature>
<gene>
    <name type="primary">actA3a</name>
</gene>
<keyword id="KW-0007">Acetylation</keyword>
<keyword id="KW-0067">ATP-binding</keyword>
<keyword id="KW-0963">Cytoplasm</keyword>
<keyword id="KW-0206">Cytoskeleton</keyword>
<keyword id="KW-0378">Hydrolase</keyword>
<keyword id="KW-0547">Nucleotide-binding</keyword>
<keyword id="KW-0558">Oxidation</keyword>
<accession>Q25010</accession>
<reference key="1">
    <citation type="journal article" date="1997" name="J. Mol. Evol.">
        <title>Evidence for gene conversion between tandemly duplicated cytoplasmic actin genes of Helicoverpa armigera (Lepidoptera: Noctuidae).</title>
        <authorList>
            <person name="Rourke I.J."/>
            <person name="East P.D."/>
        </authorList>
    </citation>
    <scope>NUCLEOTIDE SEQUENCE [GENOMIC DNA]</scope>
    <scope>TISSUE SPECIFICITY</scope>
    <scope>DEVELOPMENTAL STAGE</scope>
    <source>
        <strain>AN</strain>
        <tissue>Egg</tissue>
    </source>
</reference>
<name>ACT3A_HELAM</name>
<proteinExistence type="evidence at transcript level"/>
<dbReference type="EC" id="3.6.4.-" evidence="3"/>
<dbReference type="EMBL" id="X97614">
    <property type="protein sequence ID" value="CAA66218.1"/>
    <property type="molecule type" value="Genomic_DNA"/>
</dbReference>
<dbReference type="SMR" id="Q25010"/>
<dbReference type="EnsemblMetazoa" id="XM_021337727.2">
    <property type="protein sequence ID" value="XP_021193402.2"/>
    <property type="gene ID" value="LOC110378454"/>
</dbReference>
<dbReference type="EnsemblMetazoa" id="XM_021337743.2">
    <property type="protein sequence ID" value="XP_021193418.2"/>
    <property type="gene ID" value="LOC110378454"/>
</dbReference>
<dbReference type="OMA" id="FHTTAER"/>
<dbReference type="OrthoDB" id="5952856at2759"/>
<dbReference type="GO" id="GO:0005737">
    <property type="term" value="C:cytoplasm"/>
    <property type="evidence" value="ECO:0007669"/>
    <property type="project" value="UniProtKB-KW"/>
</dbReference>
<dbReference type="GO" id="GO:0005856">
    <property type="term" value="C:cytoskeleton"/>
    <property type="evidence" value="ECO:0007669"/>
    <property type="project" value="UniProtKB-SubCell"/>
</dbReference>
<dbReference type="GO" id="GO:0005524">
    <property type="term" value="F:ATP binding"/>
    <property type="evidence" value="ECO:0007669"/>
    <property type="project" value="UniProtKB-KW"/>
</dbReference>
<dbReference type="GO" id="GO:0016787">
    <property type="term" value="F:hydrolase activity"/>
    <property type="evidence" value="ECO:0007669"/>
    <property type="project" value="UniProtKB-KW"/>
</dbReference>
<dbReference type="CDD" id="cd10224">
    <property type="entry name" value="ASKHA_NBD_actin"/>
    <property type="match status" value="1"/>
</dbReference>
<dbReference type="FunFam" id="2.30.36.70:FF:000001">
    <property type="entry name" value="Actin, alpha skeletal muscle"/>
    <property type="match status" value="1"/>
</dbReference>
<dbReference type="FunFam" id="3.30.420.40:FF:000131">
    <property type="entry name" value="Actin, alpha skeletal muscle"/>
    <property type="match status" value="1"/>
</dbReference>
<dbReference type="FunFam" id="3.30.420.40:FF:000291">
    <property type="entry name" value="Actin, alpha skeletal muscle"/>
    <property type="match status" value="1"/>
</dbReference>
<dbReference type="FunFam" id="3.90.640.10:FF:000047">
    <property type="entry name" value="Actin, alpha skeletal muscle"/>
    <property type="match status" value="1"/>
</dbReference>
<dbReference type="FunFam" id="3.30.420.40:FF:000058">
    <property type="entry name" value="Putative actin-related protein 5"/>
    <property type="match status" value="1"/>
</dbReference>
<dbReference type="Gene3D" id="3.30.420.40">
    <property type="match status" value="2"/>
</dbReference>
<dbReference type="Gene3D" id="3.90.640.10">
    <property type="entry name" value="Actin, Chain A, domain 4"/>
    <property type="match status" value="1"/>
</dbReference>
<dbReference type="InterPro" id="IPR004000">
    <property type="entry name" value="Actin"/>
</dbReference>
<dbReference type="InterPro" id="IPR020902">
    <property type="entry name" value="Actin/actin-like_CS"/>
</dbReference>
<dbReference type="InterPro" id="IPR004001">
    <property type="entry name" value="Actin_CS"/>
</dbReference>
<dbReference type="InterPro" id="IPR043129">
    <property type="entry name" value="ATPase_NBD"/>
</dbReference>
<dbReference type="PANTHER" id="PTHR11937">
    <property type="entry name" value="ACTIN"/>
    <property type="match status" value="1"/>
</dbReference>
<dbReference type="Pfam" id="PF00022">
    <property type="entry name" value="Actin"/>
    <property type="match status" value="1"/>
</dbReference>
<dbReference type="PRINTS" id="PR00190">
    <property type="entry name" value="ACTIN"/>
</dbReference>
<dbReference type="SMART" id="SM00268">
    <property type="entry name" value="ACTIN"/>
    <property type="match status" value="1"/>
</dbReference>
<dbReference type="SUPFAM" id="SSF53067">
    <property type="entry name" value="Actin-like ATPase domain"/>
    <property type="match status" value="2"/>
</dbReference>
<dbReference type="PROSITE" id="PS00406">
    <property type="entry name" value="ACTINS_1"/>
    <property type="match status" value="1"/>
</dbReference>
<dbReference type="PROSITE" id="PS00432">
    <property type="entry name" value="ACTINS_2"/>
    <property type="match status" value="1"/>
</dbReference>
<dbReference type="PROSITE" id="PS01132">
    <property type="entry name" value="ACTINS_ACT_LIKE"/>
    <property type="match status" value="1"/>
</dbReference>
<evidence type="ECO:0000250" key="1"/>
<evidence type="ECO:0000250" key="2">
    <source>
        <dbReference type="UniProtKB" id="P62737"/>
    </source>
</evidence>
<evidence type="ECO:0000250" key="3">
    <source>
        <dbReference type="UniProtKB" id="P68137"/>
    </source>
</evidence>
<evidence type="ECO:0000269" key="4">
    <source>
    </source>
</evidence>
<evidence type="ECO:0000305" key="5"/>
<sequence>MCDEEVAALVVDNGSGMCKAGFAGDDAPRAVFPSIVGRPRHQGVMVGMGQKDSYVGDEAQSKRGILTLKYPIEHGIVTNWDDMEKIWHHTFYNELRVAPEEHPVLLTEAPLNPKANREKMTQIMFETFNTPAMYVAIQAVLSLYASGRTTGIVLDSGDGVSHTVPIYEGYALPHAILRLDLAGRDLTDYLMKILTERGYSFTTTAEREIVRDIKEKLCYVALDFEQEMATAASSSSLEKSYELPDGQVITIGNERFRCPEALFQPSFLGMEANGIHETTYNSIMKCDVDIRKDLYANTVLSGGTTMYPGIADRMQKEITALAPSTMKIKIIAPPERKYSVWIGGSILASLSTFQQMWISKQEYDESGPSIVHRKCF</sequence>
<organism>
    <name type="scientific">Helicoverpa armigera</name>
    <name type="common">Cotton bollworm</name>
    <name type="synonym">Heliothis armigera</name>
    <dbReference type="NCBI Taxonomy" id="29058"/>
    <lineage>
        <taxon>Eukaryota</taxon>
        <taxon>Metazoa</taxon>
        <taxon>Ecdysozoa</taxon>
        <taxon>Arthropoda</taxon>
        <taxon>Hexapoda</taxon>
        <taxon>Insecta</taxon>
        <taxon>Pterygota</taxon>
        <taxon>Neoptera</taxon>
        <taxon>Endopterygota</taxon>
        <taxon>Lepidoptera</taxon>
        <taxon>Glossata</taxon>
        <taxon>Ditrysia</taxon>
        <taxon>Noctuoidea</taxon>
        <taxon>Noctuidae</taxon>
        <taxon>Heliothinae</taxon>
        <taxon>Helicoverpa</taxon>
    </lineage>
</organism>